<comment type="function">
    <text evidence="1">Represses a number of genes involved in the response to DNA damage (SOS response), including recA and lexA. Binds to the 16 bp palindromic sequence 5'-CTGTATATATATACAG-3'. In the presence of single-stranded DNA, RecA interacts with LexA causing an autocatalytic cleavage which disrupts the DNA-binding part of LexA, leading to derepression of the SOS regulon and eventually DNA repair.</text>
</comment>
<comment type="catalytic activity">
    <reaction evidence="1">
        <text>Hydrolysis of Ala-|-Gly bond in repressor LexA.</text>
        <dbReference type="EC" id="3.4.21.88"/>
    </reaction>
</comment>
<comment type="subunit">
    <text evidence="1">Homodimer.</text>
</comment>
<comment type="similarity">
    <text evidence="1">Belongs to the peptidase S24 family.</text>
</comment>
<keyword id="KW-0068">Autocatalytic cleavage</keyword>
<keyword id="KW-0227">DNA damage</keyword>
<keyword id="KW-0234">DNA repair</keyword>
<keyword id="KW-0235">DNA replication</keyword>
<keyword id="KW-0238">DNA-binding</keyword>
<keyword id="KW-0378">Hydrolase</keyword>
<keyword id="KW-1185">Reference proteome</keyword>
<keyword id="KW-0678">Repressor</keyword>
<keyword id="KW-0742">SOS response</keyword>
<keyword id="KW-0804">Transcription</keyword>
<keyword id="KW-0805">Transcription regulation</keyword>
<sequence>MKALTARQQEVFDLIRDHISQTGMPPTRAEIAQRLGFRSPNAAEEHLKALARKGVIEIVSGASRGIRLLQEEEEGLPLVGRVAAGEPLLAQQHIEGHYQVDPSLFKPNADFLLRVSGMSMKDIGIMDGDLLAVHKTQDVRNGQVVVARIDDEVTVKRLKKQGNKVELLPENSEFKPIVVDLRQQSFTIEGLAVGVIRNGDWL</sequence>
<name>LEXA_ECO24</name>
<protein>
    <recommendedName>
        <fullName evidence="1">LexA repressor</fullName>
        <ecNumber evidence="1">3.4.21.88</ecNumber>
    </recommendedName>
</protein>
<gene>
    <name evidence="1" type="primary">lexA</name>
    <name type="ordered locus">EcE24377A_4596</name>
</gene>
<reference key="1">
    <citation type="journal article" date="2008" name="J. Bacteriol.">
        <title>The pangenome structure of Escherichia coli: comparative genomic analysis of E. coli commensal and pathogenic isolates.</title>
        <authorList>
            <person name="Rasko D.A."/>
            <person name="Rosovitz M.J."/>
            <person name="Myers G.S.A."/>
            <person name="Mongodin E.F."/>
            <person name="Fricke W.F."/>
            <person name="Gajer P."/>
            <person name="Crabtree J."/>
            <person name="Sebaihia M."/>
            <person name="Thomson N.R."/>
            <person name="Chaudhuri R."/>
            <person name="Henderson I.R."/>
            <person name="Sperandio V."/>
            <person name="Ravel J."/>
        </authorList>
    </citation>
    <scope>NUCLEOTIDE SEQUENCE [LARGE SCALE GENOMIC DNA]</scope>
    <source>
        <strain>E24377A / ETEC</strain>
    </source>
</reference>
<feature type="chain" id="PRO_1000057128" description="LexA repressor">
    <location>
        <begin position="1"/>
        <end position="202"/>
    </location>
</feature>
<feature type="DNA-binding region" description="H-T-H motif" evidence="1">
    <location>
        <begin position="28"/>
        <end position="48"/>
    </location>
</feature>
<feature type="active site" description="For autocatalytic cleavage activity" evidence="1">
    <location>
        <position position="119"/>
    </location>
</feature>
<feature type="active site" description="For autocatalytic cleavage activity" evidence="1">
    <location>
        <position position="156"/>
    </location>
</feature>
<feature type="site" description="Cleavage; by autolysis" evidence="1">
    <location>
        <begin position="84"/>
        <end position="85"/>
    </location>
</feature>
<organism>
    <name type="scientific">Escherichia coli O139:H28 (strain E24377A / ETEC)</name>
    <dbReference type="NCBI Taxonomy" id="331111"/>
    <lineage>
        <taxon>Bacteria</taxon>
        <taxon>Pseudomonadati</taxon>
        <taxon>Pseudomonadota</taxon>
        <taxon>Gammaproteobacteria</taxon>
        <taxon>Enterobacterales</taxon>
        <taxon>Enterobacteriaceae</taxon>
        <taxon>Escherichia</taxon>
    </lineage>
</organism>
<dbReference type="EC" id="3.4.21.88" evidence="1"/>
<dbReference type="EMBL" id="CP000800">
    <property type="protein sequence ID" value="ABV17795.1"/>
    <property type="molecule type" value="Genomic_DNA"/>
</dbReference>
<dbReference type="RefSeq" id="WP_000646078.1">
    <property type="nucleotide sequence ID" value="NC_009801.1"/>
</dbReference>
<dbReference type="SMR" id="A7ZUR5"/>
<dbReference type="MEROPS" id="S24.001"/>
<dbReference type="GeneID" id="93777788"/>
<dbReference type="KEGG" id="ecw:EcE24377A_4596"/>
<dbReference type="HOGENOM" id="CLU_066192_45_3_6"/>
<dbReference type="Proteomes" id="UP000001122">
    <property type="component" value="Chromosome"/>
</dbReference>
<dbReference type="GO" id="GO:0003677">
    <property type="term" value="F:DNA binding"/>
    <property type="evidence" value="ECO:0007669"/>
    <property type="project" value="UniProtKB-UniRule"/>
</dbReference>
<dbReference type="GO" id="GO:0004252">
    <property type="term" value="F:serine-type endopeptidase activity"/>
    <property type="evidence" value="ECO:0007669"/>
    <property type="project" value="UniProtKB-UniRule"/>
</dbReference>
<dbReference type="GO" id="GO:0006281">
    <property type="term" value="P:DNA repair"/>
    <property type="evidence" value="ECO:0007669"/>
    <property type="project" value="UniProtKB-UniRule"/>
</dbReference>
<dbReference type="GO" id="GO:0006260">
    <property type="term" value="P:DNA replication"/>
    <property type="evidence" value="ECO:0007669"/>
    <property type="project" value="UniProtKB-UniRule"/>
</dbReference>
<dbReference type="GO" id="GO:0045892">
    <property type="term" value="P:negative regulation of DNA-templated transcription"/>
    <property type="evidence" value="ECO:0007669"/>
    <property type="project" value="UniProtKB-UniRule"/>
</dbReference>
<dbReference type="GO" id="GO:0006508">
    <property type="term" value="P:proteolysis"/>
    <property type="evidence" value="ECO:0007669"/>
    <property type="project" value="InterPro"/>
</dbReference>
<dbReference type="GO" id="GO:0009432">
    <property type="term" value="P:SOS response"/>
    <property type="evidence" value="ECO:0007669"/>
    <property type="project" value="UniProtKB-UniRule"/>
</dbReference>
<dbReference type="CDD" id="cd06529">
    <property type="entry name" value="S24_LexA-like"/>
    <property type="match status" value="1"/>
</dbReference>
<dbReference type="FunFam" id="1.10.10.10:FF:000009">
    <property type="entry name" value="LexA repressor"/>
    <property type="match status" value="1"/>
</dbReference>
<dbReference type="FunFam" id="2.10.109.10:FF:000001">
    <property type="entry name" value="LexA repressor"/>
    <property type="match status" value="1"/>
</dbReference>
<dbReference type="Gene3D" id="2.10.109.10">
    <property type="entry name" value="Umud Fragment, subunit A"/>
    <property type="match status" value="1"/>
</dbReference>
<dbReference type="Gene3D" id="1.10.10.10">
    <property type="entry name" value="Winged helix-like DNA-binding domain superfamily/Winged helix DNA-binding domain"/>
    <property type="match status" value="1"/>
</dbReference>
<dbReference type="HAMAP" id="MF_00015">
    <property type="entry name" value="LexA"/>
    <property type="match status" value="1"/>
</dbReference>
<dbReference type="InterPro" id="IPR006200">
    <property type="entry name" value="LexA"/>
</dbReference>
<dbReference type="InterPro" id="IPR039418">
    <property type="entry name" value="LexA-like"/>
</dbReference>
<dbReference type="InterPro" id="IPR036286">
    <property type="entry name" value="LexA/Signal_pep-like_sf"/>
</dbReference>
<dbReference type="InterPro" id="IPR006199">
    <property type="entry name" value="LexA_DNA-bd_dom"/>
</dbReference>
<dbReference type="InterPro" id="IPR050077">
    <property type="entry name" value="LexA_repressor"/>
</dbReference>
<dbReference type="InterPro" id="IPR006197">
    <property type="entry name" value="Peptidase_S24_LexA"/>
</dbReference>
<dbReference type="InterPro" id="IPR015927">
    <property type="entry name" value="Peptidase_S24_S26A/B/C"/>
</dbReference>
<dbReference type="InterPro" id="IPR036388">
    <property type="entry name" value="WH-like_DNA-bd_sf"/>
</dbReference>
<dbReference type="InterPro" id="IPR036390">
    <property type="entry name" value="WH_DNA-bd_sf"/>
</dbReference>
<dbReference type="NCBIfam" id="TIGR00498">
    <property type="entry name" value="lexA"/>
    <property type="match status" value="1"/>
</dbReference>
<dbReference type="PANTHER" id="PTHR33516">
    <property type="entry name" value="LEXA REPRESSOR"/>
    <property type="match status" value="1"/>
</dbReference>
<dbReference type="PANTHER" id="PTHR33516:SF2">
    <property type="entry name" value="LEXA REPRESSOR-RELATED"/>
    <property type="match status" value="1"/>
</dbReference>
<dbReference type="Pfam" id="PF01726">
    <property type="entry name" value="LexA_DNA_bind"/>
    <property type="match status" value="1"/>
</dbReference>
<dbReference type="Pfam" id="PF00717">
    <property type="entry name" value="Peptidase_S24"/>
    <property type="match status" value="1"/>
</dbReference>
<dbReference type="PRINTS" id="PR00726">
    <property type="entry name" value="LEXASERPTASE"/>
</dbReference>
<dbReference type="SUPFAM" id="SSF51306">
    <property type="entry name" value="LexA/Signal peptidase"/>
    <property type="match status" value="1"/>
</dbReference>
<dbReference type="SUPFAM" id="SSF46785">
    <property type="entry name" value="Winged helix' DNA-binding domain"/>
    <property type="match status" value="1"/>
</dbReference>
<evidence type="ECO:0000255" key="1">
    <source>
        <dbReference type="HAMAP-Rule" id="MF_00015"/>
    </source>
</evidence>
<accession>A7ZUR5</accession>
<proteinExistence type="inferred from homology"/>